<keyword id="KW-0009">Actin-binding</keyword>
<keyword id="KW-0067">ATP-binding</keyword>
<keyword id="KW-0963">Cytoplasm</keyword>
<keyword id="KW-0206">Cytoskeleton</keyword>
<keyword id="KW-0378">Hydrolase</keyword>
<keyword id="KW-0505">Motor protein</keyword>
<keyword id="KW-0518">Myosin</keyword>
<keyword id="KW-0547">Nucleotide-binding</keyword>
<keyword id="KW-0597">Phosphoprotein</keyword>
<keyword id="KW-1185">Reference proteome</keyword>
<keyword id="KW-0677">Repeat</keyword>
<keyword id="KW-0728">SH3 domain</keyword>
<dbReference type="EMBL" id="CR382131">
    <property type="protein sequence ID" value="CAG79021.1"/>
    <property type="molecule type" value="Genomic_DNA"/>
</dbReference>
<dbReference type="RefSeq" id="XP_503442.1">
    <property type="nucleotide sequence ID" value="XM_503442.1"/>
</dbReference>
<dbReference type="SMR" id="Q6C7C0"/>
<dbReference type="FunCoup" id="Q6C7C0">
    <property type="interactions" value="359"/>
</dbReference>
<dbReference type="STRING" id="284591.Q6C7C0"/>
<dbReference type="EnsemblFungi" id="CAG79021">
    <property type="protein sequence ID" value="CAG79021"/>
    <property type="gene ID" value="YALI0_E02046g"/>
</dbReference>
<dbReference type="KEGG" id="yli:2912078"/>
<dbReference type="VEuPathDB" id="FungiDB:YALI0_E02046g"/>
<dbReference type="HOGENOM" id="CLU_000192_7_6_1"/>
<dbReference type="InParanoid" id="Q6C7C0"/>
<dbReference type="OMA" id="PPEEYQM"/>
<dbReference type="OrthoDB" id="113631at4891"/>
<dbReference type="Proteomes" id="UP000001300">
    <property type="component" value="Chromosome E"/>
</dbReference>
<dbReference type="GO" id="GO:0030479">
    <property type="term" value="C:actin cortical patch"/>
    <property type="evidence" value="ECO:0000318"/>
    <property type="project" value="GO_Central"/>
</dbReference>
<dbReference type="GO" id="GO:0015629">
    <property type="term" value="C:actin cytoskeleton"/>
    <property type="evidence" value="ECO:0000318"/>
    <property type="project" value="GO_Central"/>
</dbReference>
<dbReference type="GO" id="GO:0051285">
    <property type="term" value="C:cell cortex of cell tip"/>
    <property type="evidence" value="ECO:0007669"/>
    <property type="project" value="EnsemblFungi"/>
</dbReference>
<dbReference type="GO" id="GO:0051286">
    <property type="term" value="C:cell tip"/>
    <property type="evidence" value="ECO:0000318"/>
    <property type="project" value="GO_Central"/>
</dbReference>
<dbReference type="GO" id="GO:0005737">
    <property type="term" value="C:cytoplasm"/>
    <property type="evidence" value="ECO:0000318"/>
    <property type="project" value="GO_Central"/>
</dbReference>
<dbReference type="GO" id="GO:0043332">
    <property type="term" value="C:mating projection tip"/>
    <property type="evidence" value="ECO:0007669"/>
    <property type="project" value="EnsemblFungi"/>
</dbReference>
<dbReference type="GO" id="GO:0031097">
    <property type="term" value="C:medial cortex"/>
    <property type="evidence" value="ECO:0007669"/>
    <property type="project" value="EnsemblFungi"/>
</dbReference>
<dbReference type="GO" id="GO:0045160">
    <property type="term" value="C:myosin I complex"/>
    <property type="evidence" value="ECO:0007669"/>
    <property type="project" value="EnsemblFungi"/>
</dbReference>
<dbReference type="GO" id="GO:0005886">
    <property type="term" value="C:plasma membrane"/>
    <property type="evidence" value="ECO:0000318"/>
    <property type="project" value="GO_Central"/>
</dbReference>
<dbReference type="GO" id="GO:0044853">
    <property type="term" value="C:plasma membrane raft"/>
    <property type="evidence" value="ECO:0007669"/>
    <property type="project" value="EnsemblFungi"/>
</dbReference>
<dbReference type="GO" id="GO:0005628">
    <property type="term" value="C:prospore membrane"/>
    <property type="evidence" value="ECO:0007669"/>
    <property type="project" value="EnsemblFungi"/>
</dbReference>
<dbReference type="GO" id="GO:0051015">
    <property type="term" value="F:actin filament binding"/>
    <property type="evidence" value="ECO:0000318"/>
    <property type="project" value="GO_Central"/>
</dbReference>
<dbReference type="GO" id="GO:0071933">
    <property type="term" value="F:Arp2/3 complex binding"/>
    <property type="evidence" value="ECO:0007669"/>
    <property type="project" value="EnsemblFungi"/>
</dbReference>
<dbReference type="GO" id="GO:0005524">
    <property type="term" value="F:ATP binding"/>
    <property type="evidence" value="ECO:0007669"/>
    <property type="project" value="UniProtKB-KW"/>
</dbReference>
<dbReference type="GO" id="GO:0016787">
    <property type="term" value="F:hydrolase activity"/>
    <property type="evidence" value="ECO:0007669"/>
    <property type="project" value="UniProtKB-KW"/>
</dbReference>
<dbReference type="GO" id="GO:0000146">
    <property type="term" value="F:microfilament motor activity"/>
    <property type="evidence" value="ECO:0000318"/>
    <property type="project" value="GO_Central"/>
</dbReference>
<dbReference type="GO" id="GO:0000147">
    <property type="term" value="P:actin cortical patch assembly"/>
    <property type="evidence" value="ECO:0007669"/>
    <property type="project" value="EnsemblFungi"/>
</dbReference>
<dbReference type="GO" id="GO:0051666">
    <property type="term" value="P:actin cortical patch localization"/>
    <property type="evidence" value="ECO:0000318"/>
    <property type="project" value="GO_Central"/>
</dbReference>
<dbReference type="GO" id="GO:0007015">
    <property type="term" value="P:actin filament organization"/>
    <property type="evidence" value="ECO:0000318"/>
    <property type="project" value="GO_Central"/>
</dbReference>
<dbReference type="GO" id="GO:0006897">
    <property type="term" value="P:endocytosis"/>
    <property type="evidence" value="ECO:0000318"/>
    <property type="project" value="GO_Central"/>
</dbReference>
<dbReference type="GO" id="GO:0000281">
    <property type="term" value="P:mitotic cytokinesis"/>
    <property type="evidence" value="ECO:0007669"/>
    <property type="project" value="EnsemblFungi"/>
</dbReference>
<dbReference type="CDD" id="cd01378">
    <property type="entry name" value="MYSc_Myo1"/>
    <property type="match status" value="1"/>
</dbReference>
<dbReference type="CDD" id="cd11858">
    <property type="entry name" value="SH3_Myosin-I_fungi"/>
    <property type="match status" value="1"/>
</dbReference>
<dbReference type="FunFam" id="1.10.10.820:FF:000001">
    <property type="entry name" value="Myosin heavy chain"/>
    <property type="match status" value="1"/>
</dbReference>
<dbReference type="FunFam" id="1.20.120.720:FF:000015">
    <property type="entry name" value="Myosin I"/>
    <property type="match status" value="1"/>
</dbReference>
<dbReference type="FunFam" id="1.20.5.4820:FF:000004">
    <property type="entry name" value="Myosin IE"/>
    <property type="match status" value="1"/>
</dbReference>
<dbReference type="FunFam" id="1.20.58.530:FF:000007">
    <property type="entry name" value="Myosin IE"/>
    <property type="match status" value="1"/>
</dbReference>
<dbReference type="Gene3D" id="1.10.10.820">
    <property type="match status" value="1"/>
</dbReference>
<dbReference type="Gene3D" id="1.20.5.4820">
    <property type="match status" value="1"/>
</dbReference>
<dbReference type="Gene3D" id="1.20.58.530">
    <property type="match status" value="1"/>
</dbReference>
<dbReference type="Gene3D" id="3.40.850.10">
    <property type="entry name" value="Kinesin motor domain"/>
    <property type="match status" value="1"/>
</dbReference>
<dbReference type="Gene3D" id="1.20.120.720">
    <property type="entry name" value="Myosin VI head, motor domain, U50 subdomain"/>
    <property type="match status" value="1"/>
</dbReference>
<dbReference type="Gene3D" id="2.30.30.40">
    <property type="entry name" value="SH3 Domains"/>
    <property type="match status" value="1"/>
</dbReference>
<dbReference type="InterPro" id="IPR035535">
    <property type="entry name" value="Fungal_myosin-I_SH3"/>
</dbReference>
<dbReference type="InterPro" id="IPR036961">
    <property type="entry name" value="Kinesin_motor_dom_sf"/>
</dbReference>
<dbReference type="InterPro" id="IPR001609">
    <property type="entry name" value="Myosin_head_motor_dom-like"/>
</dbReference>
<dbReference type="InterPro" id="IPR010926">
    <property type="entry name" value="Myosin_TH1"/>
</dbReference>
<dbReference type="InterPro" id="IPR036072">
    <property type="entry name" value="MYSc_Myo1"/>
</dbReference>
<dbReference type="InterPro" id="IPR027417">
    <property type="entry name" value="P-loop_NTPase"/>
</dbReference>
<dbReference type="InterPro" id="IPR036028">
    <property type="entry name" value="SH3-like_dom_sf"/>
</dbReference>
<dbReference type="InterPro" id="IPR001452">
    <property type="entry name" value="SH3_domain"/>
</dbReference>
<dbReference type="PANTHER" id="PTHR13140">
    <property type="entry name" value="MYOSIN"/>
    <property type="match status" value="1"/>
</dbReference>
<dbReference type="PANTHER" id="PTHR13140:SF837">
    <property type="entry name" value="MYOSIN-3-RELATED"/>
    <property type="match status" value="1"/>
</dbReference>
<dbReference type="Pfam" id="PF00063">
    <property type="entry name" value="Myosin_head"/>
    <property type="match status" value="1"/>
</dbReference>
<dbReference type="Pfam" id="PF06017">
    <property type="entry name" value="Myosin_TH1"/>
    <property type="match status" value="1"/>
</dbReference>
<dbReference type="Pfam" id="PF00018">
    <property type="entry name" value="SH3_1"/>
    <property type="match status" value="1"/>
</dbReference>
<dbReference type="PRINTS" id="PR00193">
    <property type="entry name" value="MYOSINHEAVY"/>
</dbReference>
<dbReference type="SMART" id="SM00242">
    <property type="entry name" value="MYSc"/>
    <property type="match status" value="1"/>
</dbReference>
<dbReference type="SMART" id="SM00326">
    <property type="entry name" value="SH3"/>
    <property type="match status" value="1"/>
</dbReference>
<dbReference type="SUPFAM" id="SSF52540">
    <property type="entry name" value="P-loop containing nucleoside triphosphate hydrolases"/>
    <property type="match status" value="1"/>
</dbReference>
<dbReference type="SUPFAM" id="SSF50044">
    <property type="entry name" value="SH3-domain"/>
    <property type="match status" value="1"/>
</dbReference>
<dbReference type="PROSITE" id="PS51456">
    <property type="entry name" value="MYOSIN_MOTOR"/>
    <property type="match status" value="1"/>
</dbReference>
<dbReference type="PROSITE" id="PS50002">
    <property type="entry name" value="SH3"/>
    <property type="match status" value="1"/>
</dbReference>
<dbReference type="PROSITE" id="PS51757">
    <property type="entry name" value="TH1"/>
    <property type="match status" value="1"/>
</dbReference>
<gene>
    <name type="primary">MYO1</name>
    <name type="ordered locus">YALI0E02046g</name>
</gene>
<reference key="1">
    <citation type="journal article" date="2004" name="Nature">
        <title>Genome evolution in yeasts.</title>
        <authorList>
            <person name="Dujon B."/>
            <person name="Sherman D."/>
            <person name="Fischer G."/>
            <person name="Durrens P."/>
            <person name="Casaregola S."/>
            <person name="Lafontaine I."/>
            <person name="de Montigny J."/>
            <person name="Marck C."/>
            <person name="Neuveglise C."/>
            <person name="Talla E."/>
            <person name="Goffard N."/>
            <person name="Frangeul L."/>
            <person name="Aigle M."/>
            <person name="Anthouard V."/>
            <person name="Babour A."/>
            <person name="Barbe V."/>
            <person name="Barnay S."/>
            <person name="Blanchin S."/>
            <person name="Beckerich J.-M."/>
            <person name="Beyne E."/>
            <person name="Bleykasten C."/>
            <person name="Boisrame A."/>
            <person name="Boyer J."/>
            <person name="Cattolico L."/>
            <person name="Confanioleri F."/>
            <person name="de Daruvar A."/>
            <person name="Despons L."/>
            <person name="Fabre E."/>
            <person name="Fairhead C."/>
            <person name="Ferry-Dumazet H."/>
            <person name="Groppi A."/>
            <person name="Hantraye F."/>
            <person name="Hennequin C."/>
            <person name="Jauniaux N."/>
            <person name="Joyet P."/>
            <person name="Kachouri R."/>
            <person name="Kerrest A."/>
            <person name="Koszul R."/>
            <person name="Lemaire M."/>
            <person name="Lesur I."/>
            <person name="Ma L."/>
            <person name="Muller H."/>
            <person name="Nicaud J.-M."/>
            <person name="Nikolski M."/>
            <person name="Oztas S."/>
            <person name="Ozier-Kalogeropoulos O."/>
            <person name="Pellenz S."/>
            <person name="Potier S."/>
            <person name="Richard G.-F."/>
            <person name="Straub M.-L."/>
            <person name="Suleau A."/>
            <person name="Swennen D."/>
            <person name="Tekaia F."/>
            <person name="Wesolowski-Louvel M."/>
            <person name="Westhof E."/>
            <person name="Wirth B."/>
            <person name="Zeniou-Meyer M."/>
            <person name="Zivanovic Y."/>
            <person name="Bolotin-Fukuhara M."/>
            <person name="Thierry A."/>
            <person name="Bouchier C."/>
            <person name="Caudron B."/>
            <person name="Scarpelli C."/>
            <person name="Gaillardin C."/>
            <person name="Weissenbach J."/>
            <person name="Wincker P."/>
            <person name="Souciet J.-L."/>
        </authorList>
    </citation>
    <scope>NUCLEOTIDE SEQUENCE [LARGE SCALE GENOMIC DNA]</scope>
    <source>
        <strain>CLIB 122 / E 150</strain>
    </source>
</reference>
<feature type="chain" id="PRO_0000338564" description="Myosin-1">
    <location>
        <begin position="1"/>
        <end position="1228"/>
    </location>
</feature>
<feature type="domain" description="Myosin motor" evidence="4">
    <location>
        <begin position="37"/>
        <end position="716"/>
    </location>
</feature>
<feature type="domain" description="IQ 1">
    <location>
        <begin position="720"/>
        <end position="740"/>
    </location>
</feature>
<feature type="domain" description="IQ 2">
    <location>
        <begin position="741"/>
        <end position="768"/>
    </location>
</feature>
<feature type="domain" description="TH1" evidence="5">
    <location>
        <begin position="776"/>
        <end position="962"/>
    </location>
</feature>
<feature type="domain" description="SH3" evidence="3">
    <location>
        <begin position="1109"/>
        <end position="1170"/>
    </location>
</feature>
<feature type="region of interest" description="Disordered" evidence="6">
    <location>
        <begin position="1"/>
        <end position="27"/>
    </location>
</feature>
<feature type="region of interest" description="Actin-binding" evidence="1">
    <location>
        <begin position="405"/>
        <end position="487"/>
    </location>
</feature>
<feature type="region of interest" description="Disordered" evidence="6">
    <location>
        <begin position="953"/>
        <end position="1040"/>
    </location>
</feature>
<feature type="region of interest" description="Disordered" evidence="6">
    <location>
        <begin position="1053"/>
        <end position="1109"/>
    </location>
</feature>
<feature type="region of interest" description="Disordered" evidence="6">
    <location>
        <begin position="1169"/>
        <end position="1228"/>
    </location>
</feature>
<feature type="compositionally biased region" description="Polar residues" evidence="6">
    <location>
        <begin position="1053"/>
        <end position="1063"/>
    </location>
</feature>
<feature type="compositionally biased region" description="Low complexity" evidence="6">
    <location>
        <begin position="1064"/>
        <end position="1092"/>
    </location>
</feature>
<feature type="compositionally biased region" description="Pro residues" evidence="6">
    <location>
        <begin position="1093"/>
        <end position="1106"/>
    </location>
</feature>
<feature type="compositionally biased region" description="Low complexity" evidence="6">
    <location>
        <begin position="1180"/>
        <end position="1194"/>
    </location>
</feature>
<feature type="binding site" evidence="2">
    <location>
        <begin position="130"/>
        <end position="137"/>
    </location>
    <ligand>
        <name>ATP</name>
        <dbReference type="ChEBI" id="CHEBI:30616"/>
    </ligand>
</feature>
<feature type="modified residue" description="Phosphoserine" evidence="1">
    <location>
        <position position="358"/>
    </location>
</feature>
<sequence length="1228" mass="136132">MAVTKRAGRRAQGGTQPAKGAQGVKKATFESGKKREVGVSDLTLLSKVSEEAINENLKKRFENGTIYTYIGHVLISVNPFRDLGIYTDAVLESYKGKNRLEVPPHVFSIAESMYYNMKSYSENQCVIISGESGAGKTEASKRIMQYIASASGGSSSNIQKIKDMVLATNPLLEAFGCAKTLRNDNSSRHGKYLEIQFNNQAEPVGANITNYLLEKGRVVGQIRNERNFHIFYQFAKAASENYRSTFGIQPPEAYTYTSASGCTSVNGINDEAEFKETLAAMNLIGLTQAEQDNLFKLLAAILWIGNMSFVEDKDGNAAIADVSVPNFVAYLLEVDAESVVKAVTQRIMETSRGGRRGSVYEVALNIAQATSVRDALAKGIYNNLFDWIVERVNQSLRAPQDAARTIGILDIYGFEIFESNSFEQICINYVNEKLQQIFIQLTLKTEQDEYVREQIAWTPINYFNNKIVCDLIEEKRPPGIFAALNDACATAHADPNAADENFIQRMSMVGQNPHFEQRQRKFVIKHYAGDVTYDVKGITDKNKDQLLKDILILLQKSGNPFLVSLFPDPVNTDNRRRPPTASDKIKKSANDLVTTLSAAQPSYIRTIKPNQNRSPTEYDEKAVLHQVKYLGLQENVRIRRAGFAYRQTFEKFVERFMLLSGKTSYAGDYIWQGSAYDATLCILRDAGIPQTEYQMGTTKVFIKTPETLFALEHMRDMWWHNMAARIQRAWRRYLAYKTECAIKIQRFWRLKRGLDGLKEIQFRDSGHKLLGGRKERRTYSLIGYRRFQGDYLGCNNGSGFGDFLMKQIGVTDKVFFSCRGQLQQSRLGRSSVRVPRTFILTKNNFYVVAQQIHQKQLVVTNEYTIPVRNITHMSMSNLRDDWFCLNQASSPYGDQLMWCVFKTELAVQLRVVKPGVDIRIGPQIDYFKKQGKKASVKFQKTTTLQTKFDMYKSGSVQVPPGAPPNSVSKETPRGRAKGSRGGAPSRPAARGNAAHTPTPGAAALGYQQHQPGSAQPASPRARKAPPPAPNSRGNGHAESAQPQAYNNLQPHYQSLVNPRSGQGQQQQQHHQAYQQPTAAQPAATSYSPAPAKAAPPPPPPAPPAAPAAPAEPTYKALYDYVANGLNQLSISAGEQVLISVKEDQGWWLAKRMDGSEEGWTPAAYLEEVQGGAAAPPPAAPTAGGASAGASLAEALKQKQQSNQTLGAGIADAIKARTGRPADDDDDDW</sequence>
<name>MYO1_YARLI</name>
<organism>
    <name type="scientific">Yarrowia lipolytica (strain CLIB 122 / E 150)</name>
    <name type="common">Yeast</name>
    <name type="synonym">Candida lipolytica</name>
    <dbReference type="NCBI Taxonomy" id="284591"/>
    <lineage>
        <taxon>Eukaryota</taxon>
        <taxon>Fungi</taxon>
        <taxon>Dikarya</taxon>
        <taxon>Ascomycota</taxon>
        <taxon>Saccharomycotina</taxon>
        <taxon>Dipodascomycetes</taxon>
        <taxon>Dipodascales</taxon>
        <taxon>Dipodascales incertae sedis</taxon>
        <taxon>Yarrowia</taxon>
    </lineage>
</organism>
<comment type="function">
    <text evidence="1">Type-I myosin implicated in the organization of the actin cytoskeleton. Required for proper actin cytoskeleton polarization. At the cell cortex, assembles in patch-like structures together with proteins from the actin-polymerizing machinery and promotes actin assembly. Functions as actin nucleation-promoting factor (NPF) for the Arp2/3 complex (By similarity).</text>
</comment>
<comment type="subcellular location">
    <subcellularLocation>
        <location evidence="1">Cytoplasm</location>
        <location evidence="1">Cytoskeleton</location>
        <location evidence="1">Actin patch</location>
    </subcellularLocation>
</comment>
<comment type="domain">
    <text evidence="1">The myosin motor domain displays actin-stimulated ATPase activity and generates a mechanochemical force.</text>
</comment>
<comment type="domain">
    <text evidence="1">The tail domain participates in molecular interactions that specify the role of the motor domain (By similarity). It is composed of several tail homology (TH) domains, namely a putative phospholipid-binding myosin tail domain (also named TH1), an Ala- and Pro-rich domain (TH2), followed by an SH3 domain and a C-terminal acidic domain (TH3).</text>
</comment>
<comment type="PTM">
    <text evidence="1">Phosphorylation of the TEDS site (Ser-358) is required for the polarization of the actin cytoskeleton. Phosphorylation probably activates the myosin-I ATPase activity (By similarity).</text>
</comment>
<comment type="similarity">
    <text evidence="7">Belongs to the TRAFAC class myosin-kinesin ATPase superfamily. Myosin family.</text>
</comment>
<protein>
    <recommendedName>
        <fullName>Myosin-1</fullName>
    </recommendedName>
    <alternativeName>
        <fullName>Class I unconventional myosin</fullName>
    </alternativeName>
    <alternativeName>
        <fullName>Type I myosin</fullName>
    </alternativeName>
</protein>
<accession>Q6C7C0</accession>
<evidence type="ECO:0000250" key="1"/>
<evidence type="ECO:0000255" key="2"/>
<evidence type="ECO:0000255" key="3">
    <source>
        <dbReference type="PROSITE-ProRule" id="PRU00192"/>
    </source>
</evidence>
<evidence type="ECO:0000255" key="4">
    <source>
        <dbReference type="PROSITE-ProRule" id="PRU00782"/>
    </source>
</evidence>
<evidence type="ECO:0000255" key="5">
    <source>
        <dbReference type="PROSITE-ProRule" id="PRU01093"/>
    </source>
</evidence>
<evidence type="ECO:0000256" key="6">
    <source>
        <dbReference type="SAM" id="MobiDB-lite"/>
    </source>
</evidence>
<evidence type="ECO:0000305" key="7"/>
<proteinExistence type="inferred from homology"/>